<sequence>MAEEHGGLDWLRGRSVLVAGAGVSGRATIEPLRDLGALVTVTDANVDALAECARLGAATVPIDDLLAERDRVAEFALVVTSPGFRPDAPLLSLAAGDGVPIWGDIEFSWHVDRAGLYGPPRRWLVVTGTNGKTTTTSMLQSILEAAELPSLACGNIGIPVLDALRQTEPRAEALAVELSSFQLHWAPSVRPTAGAILNIAEDHLDWHGGMQPYIDAKARALTGEVAVLGLDDEVASSLFSSSPAVRTVGFRLGVPAPGELGVEDGYLVDRAFADGERLAPAEGITPPGPAGLMDALAAAALARAIGVPPDAVAAGLAAHVVGPHRAALVAEVGGVTFVDDSKATNPHAARPSILAHERVVWIAGGLLKGARVDDLVREVASRLAGAVLLGRDAMQIAESLARHAPEVPVVTVETGDDAGVSAVPQTATHRVVLPADTDSDAVMGVVVREAAALATAGDSVVLAPAAASLDMFASYGHRGDSFTDAVGRLDASDISRTLR</sequence>
<organism>
    <name type="scientific">Rhodococcus jostii (strain RHA1)</name>
    <dbReference type="NCBI Taxonomy" id="101510"/>
    <lineage>
        <taxon>Bacteria</taxon>
        <taxon>Bacillati</taxon>
        <taxon>Actinomycetota</taxon>
        <taxon>Actinomycetes</taxon>
        <taxon>Mycobacteriales</taxon>
        <taxon>Nocardiaceae</taxon>
        <taxon>Rhodococcus</taxon>
    </lineage>
</organism>
<dbReference type="EC" id="6.3.2.9" evidence="1"/>
<dbReference type="EMBL" id="CP000431">
    <property type="protein sequence ID" value="ABG92917.1"/>
    <property type="molecule type" value="Genomic_DNA"/>
</dbReference>
<dbReference type="RefSeq" id="WP_011594225.1">
    <property type="nucleotide sequence ID" value="NC_008268.1"/>
</dbReference>
<dbReference type="SMR" id="Q0SHR9"/>
<dbReference type="KEGG" id="rha:RHA1_ro01090"/>
<dbReference type="PATRIC" id="fig|101510.16.peg.1114"/>
<dbReference type="eggNOG" id="COG0771">
    <property type="taxonomic scope" value="Bacteria"/>
</dbReference>
<dbReference type="HOGENOM" id="CLU_032540_0_0_11"/>
<dbReference type="OrthoDB" id="9809796at2"/>
<dbReference type="UniPathway" id="UPA00219"/>
<dbReference type="Proteomes" id="UP000008710">
    <property type="component" value="Chromosome"/>
</dbReference>
<dbReference type="GO" id="GO:0005737">
    <property type="term" value="C:cytoplasm"/>
    <property type="evidence" value="ECO:0007669"/>
    <property type="project" value="UniProtKB-SubCell"/>
</dbReference>
<dbReference type="GO" id="GO:0005524">
    <property type="term" value="F:ATP binding"/>
    <property type="evidence" value="ECO:0007669"/>
    <property type="project" value="UniProtKB-UniRule"/>
</dbReference>
<dbReference type="GO" id="GO:0008764">
    <property type="term" value="F:UDP-N-acetylmuramoylalanine-D-glutamate ligase activity"/>
    <property type="evidence" value="ECO:0007669"/>
    <property type="project" value="UniProtKB-UniRule"/>
</dbReference>
<dbReference type="GO" id="GO:0051301">
    <property type="term" value="P:cell division"/>
    <property type="evidence" value="ECO:0007669"/>
    <property type="project" value="UniProtKB-KW"/>
</dbReference>
<dbReference type="GO" id="GO:0071555">
    <property type="term" value="P:cell wall organization"/>
    <property type="evidence" value="ECO:0007669"/>
    <property type="project" value="UniProtKB-KW"/>
</dbReference>
<dbReference type="GO" id="GO:0009252">
    <property type="term" value="P:peptidoglycan biosynthetic process"/>
    <property type="evidence" value="ECO:0007669"/>
    <property type="project" value="UniProtKB-UniRule"/>
</dbReference>
<dbReference type="GO" id="GO:0008360">
    <property type="term" value="P:regulation of cell shape"/>
    <property type="evidence" value="ECO:0007669"/>
    <property type="project" value="UniProtKB-KW"/>
</dbReference>
<dbReference type="Gene3D" id="3.90.190.20">
    <property type="entry name" value="Mur ligase, C-terminal domain"/>
    <property type="match status" value="1"/>
</dbReference>
<dbReference type="Gene3D" id="3.40.1190.10">
    <property type="entry name" value="Mur-like, catalytic domain"/>
    <property type="match status" value="1"/>
</dbReference>
<dbReference type="Gene3D" id="3.40.50.720">
    <property type="entry name" value="NAD(P)-binding Rossmann-like Domain"/>
    <property type="match status" value="1"/>
</dbReference>
<dbReference type="HAMAP" id="MF_00639">
    <property type="entry name" value="MurD"/>
    <property type="match status" value="1"/>
</dbReference>
<dbReference type="InterPro" id="IPR007698">
    <property type="entry name" value="AlaDH/PNT_NAD(H)-bd"/>
</dbReference>
<dbReference type="InterPro" id="IPR036565">
    <property type="entry name" value="Mur-like_cat_sf"/>
</dbReference>
<dbReference type="InterPro" id="IPR036615">
    <property type="entry name" value="Mur_ligase_C_dom_sf"/>
</dbReference>
<dbReference type="InterPro" id="IPR013221">
    <property type="entry name" value="Mur_ligase_cen"/>
</dbReference>
<dbReference type="InterPro" id="IPR005762">
    <property type="entry name" value="MurD"/>
</dbReference>
<dbReference type="NCBIfam" id="TIGR01087">
    <property type="entry name" value="murD"/>
    <property type="match status" value="1"/>
</dbReference>
<dbReference type="PANTHER" id="PTHR43692">
    <property type="entry name" value="UDP-N-ACETYLMURAMOYLALANINE--D-GLUTAMATE LIGASE"/>
    <property type="match status" value="1"/>
</dbReference>
<dbReference type="PANTHER" id="PTHR43692:SF1">
    <property type="entry name" value="UDP-N-ACETYLMURAMOYLALANINE--D-GLUTAMATE LIGASE"/>
    <property type="match status" value="1"/>
</dbReference>
<dbReference type="Pfam" id="PF01262">
    <property type="entry name" value="AlaDh_PNT_C"/>
    <property type="match status" value="1"/>
</dbReference>
<dbReference type="Pfam" id="PF08245">
    <property type="entry name" value="Mur_ligase_M"/>
    <property type="match status" value="1"/>
</dbReference>
<dbReference type="SUPFAM" id="SSF51984">
    <property type="entry name" value="MurCD N-terminal domain"/>
    <property type="match status" value="1"/>
</dbReference>
<dbReference type="SUPFAM" id="SSF53623">
    <property type="entry name" value="MurD-like peptide ligases, catalytic domain"/>
    <property type="match status" value="1"/>
</dbReference>
<dbReference type="SUPFAM" id="SSF53244">
    <property type="entry name" value="MurD-like peptide ligases, peptide-binding domain"/>
    <property type="match status" value="1"/>
</dbReference>
<gene>
    <name evidence="1" type="primary">murD</name>
    <name type="ordered locus">RHA1_ro01090</name>
</gene>
<name>MURD_RHOJR</name>
<feature type="chain" id="PRO_0000257226" description="UDP-N-acetylmuramoylalanine--D-glutamate ligase">
    <location>
        <begin position="1"/>
        <end position="499"/>
    </location>
</feature>
<feature type="binding site" evidence="1">
    <location>
        <begin position="128"/>
        <end position="134"/>
    </location>
    <ligand>
        <name>ATP</name>
        <dbReference type="ChEBI" id="CHEBI:30616"/>
    </ligand>
</feature>
<keyword id="KW-0067">ATP-binding</keyword>
<keyword id="KW-0131">Cell cycle</keyword>
<keyword id="KW-0132">Cell division</keyword>
<keyword id="KW-0133">Cell shape</keyword>
<keyword id="KW-0961">Cell wall biogenesis/degradation</keyword>
<keyword id="KW-0963">Cytoplasm</keyword>
<keyword id="KW-0436">Ligase</keyword>
<keyword id="KW-0547">Nucleotide-binding</keyword>
<keyword id="KW-0573">Peptidoglycan synthesis</keyword>
<proteinExistence type="inferred from homology"/>
<evidence type="ECO:0000255" key="1">
    <source>
        <dbReference type="HAMAP-Rule" id="MF_00639"/>
    </source>
</evidence>
<protein>
    <recommendedName>
        <fullName evidence="1">UDP-N-acetylmuramoylalanine--D-glutamate ligase</fullName>
        <ecNumber evidence="1">6.3.2.9</ecNumber>
    </recommendedName>
    <alternativeName>
        <fullName evidence="1">D-glutamic acid-adding enzyme</fullName>
    </alternativeName>
    <alternativeName>
        <fullName evidence="1">UDP-N-acetylmuramoyl-L-alanyl-D-glutamate synthetase</fullName>
    </alternativeName>
</protein>
<reference key="1">
    <citation type="journal article" date="2006" name="Proc. Natl. Acad. Sci. U.S.A.">
        <title>The complete genome of Rhodococcus sp. RHA1 provides insights into a catabolic powerhouse.</title>
        <authorList>
            <person name="McLeod M.P."/>
            <person name="Warren R.L."/>
            <person name="Hsiao W.W.L."/>
            <person name="Araki N."/>
            <person name="Myhre M."/>
            <person name="Fernandes C."/>
            <person name="Miyazawa D."/>
            <person name="Wong W."/>
            <person name="Lillquist A.L."/>
            <person name="Wang D."/>
            <person name="Dosanjh M."/>
            <person name="Hara H."/>
            <person name="Petrescu A."/>
            <person name="Morin R.D."/>
            <person name="Yang G."/>
            <person name="Stott J.M."/>
            <person name="Schein J.E."/>
            <person name="Shin H."/>
            <person name="Smailus D."/>
            <person name="Siddiqui A.S."/>
            <person name="Marra M.A."/>
            <person name="Jones S.J.M."/>
            <person name="Holt R."/>
            <person name="Brinkman F.S.L."/>
            <person name="Miyauchi K."/>
            <person name="Fukuda M."/>
            <person name="Davies J.E."/>
            <person name="Mohn W.W."/>
            <person name="Eltis L.D."/>
        </authorList>
    </citation>
    <scope>NUCLEOTIDE SEQUENCE [LARGE SCALE GENOMIC DNA]</scope>
    <source>
        <strain>RHA1</strain>
    </source>
</reference>
<accession>Q0SHR9</accession>
<comment type="function">
    <text evidence="1">Cell wall formation. Catalyzes the addition of glutamate to the nucleotide precursor UDP-N-acetylmuramoyl-L-alanine (UMA).</text>
</comment>
<comment type="catalytic activity">
    <reaction evidence="1">
        <text>UDP-N-acetyl-alpha-D-muramoyl-L-alanine + D-glutamate + ATP = UDP-N-acetyl-alpha-D-muramoyl-L-alanyl-D-glutamate + ADP + phosphate + H(+)</text>
        <dbReference type="Rhea" id="RHEA:16429"/>
        <dbReference type="ChEBI" id="CHEBI:15378"/>
        <dbReference type="ChEBI" id="CHEBI:29986"/>
        <dbReference type="ChEBI" id="CHEBI:30616"/>
        <dbReference type="ChEBI" id="CHEBI:43474"/>
        <dbReference type="ChEBI" id="CHEBI:83898"/>
        <dbReference type="ChEBI" id="CHEBI:83900"/>
        <dbReference type="ChEBI" id="CHEBI:456216"/>
        <dbReference type="EC" id="6.3.2.9"/>
    </reaction>
</comment>
<comment type="pathway">
    <text evidence="1">Cell wall biogenesis; peptidoglycan biosynthesis.</text>
</comment>
<comment type="subcellular location">
    <subcellularLocation>
        <location evidence="1">Cytoplasm</location>
    </subcellularLocation>
</comment>
<comment type="similarity">
    <text evidence="1">Belongs to the MurCDEF family.</text>
</comment>